<name>ERO1_KLULA</name>
<keyword id="KW-1015">Disulfide bond</keyword>
<keyword id="KW-0249">Electron transport</keyword>
<keyword id="KW-0256">Endoplasmic reticulum</keyword>
<keyword id="KW-0274">FAD</keyword>
<keyword id="KW-0285">Flavoprotein</keyword>
<keyword id="KW-0325">Glycoprotein</keyword>
<keyword id="KW-0472">Membrane</keyword>
<keyword id="KW-0560">Oxidoreductase</keyword>
<keyword id="KW-0676">Redox-active center</keyword>
<keyword id="KW-1185">Reference proteome</keyword>
<keyword id="KW-0732">Signal</keyword>
<keyword id="KW-0813">Transport</keyword>
<feature type="signal peptide" evidence="3">
    <location>
        <begin position="1"/>
        <end position="18"/>
    </location>
</feature>
<feature type="chain" id="PRO_0000008425" description="Endoplasmic reticulum oxidoreductin-1">
    <location>
        <begin position="19"/>
        <end position="561"/>
    </location>
</feature>
<feature type="active site" description="Nucleophile" evidence="2">
    <location>
        <position position="352"/>
    </location>
</feature>
<feature type="active site" evidence="2">
    <location>
        <position position="355"/>
    </location>
</feature>
<feature type="binding site" evidence="2">
    <location>
        <position position="187"/>
    </location>
    <ligand>
        <name>FAD</name>
        <dbReference type="ChEBI" id="CHEBI:57692"/>
    </ligand>
</feature>
<feature type="binding site" evidence="2">
    <location>
        <position position="189"/>
    </location>
    <ligand>
        <name>FAD</name>
        <dbReference type="ChEBI" id="CHEBI:57692"/>
    </ligand>
</feature>
<feature type="binding site" evidence="2">
    <location>
        <position position="200"/>
    </location>
    <ligand>
        <name>FAD</name>
        <dbReference type="ChEBI" id="CHEBI:57692"/>
    </ligand>
</feature>
<feature type="binding site" evidence="2">
    <location>
        <position position="228"/>
    </location>
    <ligand>
        <name>FAD</name>
        <dbReference type="ChEBI" id="CHEBI:57692"/>
    </ligand>
</feature>
<feature type="binding site" evidence="2">
    <location>
        <position position="231"/>
    </location>
    <ligand>
        <name>FAD</name>
        <dbReference type="ChEBI" id="CHEBI:57692"/>
    </ligand>
</feature>
<feature type="binding site" evidence="2">
    <location>
        <position position="260"/>
    </location>
    <ligand>
        <name>FAD</name>
        <dbReference type="ChEBI" id="CHEBI:57692"/>
    </ligand>
</feature>
<feature type="glycosylation site" description="N-linked (GlcNAc...) asparagine" evidence="3">
    <location>
        <position position="20"/>
    </location>
</feature>
<feature type="glycosylation site" description="N-linked (GlcNAc...) asparagine" evidence="3">
    <location>
        <position position="39"/>
    </location>
</feature>
<feature type="glycosylation site" description="N-linked (GlcNAc...) asparagine" evidence="3">
    <location>
        <position position="135"/>
    </location>
</feature>
<feature type="glycosylation site" description="N-linked (GlcNAc...) asparagine" evidence="3">
    <location>
        <position position="342"/>
    </location>
</feature>
<feature type="glycosylation site" description="N-linked (GlcNAc...) asparagine" evidence="3">
    <location>
        <position position="452"/>
    </location>
</feature>
<feature type="disulfide bond" evidence="2">
    <location>
        <begin position="95"/>
        <end position="349"/>
    </location>
</feature>
<feature type="disulfide bond" description="Redox-active" evidence="2">
    <location>
        <begin position="105"/>
        <end position="110"/>
    </location>
</feature>
<feature type="disulfide bond" evidence="2">
    <location>
        <begin position="145"/>
        <end position="166"/>
    </location>
</feature>
<feature type="disulfide bond" evidence="2">
    <location>
        <begin position="152"/>
        <end position="295"/>
    </location>
</feature>
<feature type="disulfide bond" description="Redox-active" evidence="2">
    <location>
        <begin position="352"/>
        <end position="355"/>
    </location>
</feature>
<organism>
    <name type="scientific">Kluyveromyces lactis (strain ATCC 8585 / CBS 2359 / DSM 70799 / NBRC 1267 / NRRL Y-1140 / WM37)</name>
    <name type="common">Yeast</name>
    <name type="synonym">Candida sphaerica</name>
    <dbReference type="NCBI Taxonomy" id="284590"/>
    <lineage>
        <taxon>Eukaryota</taxon>
        <taxon>Fungi</taxon>
        <taxon>Dikarya</taxon>
        <taxon>Ascomycota</taxon>
        <taxon>Saccharomycotina</taxon>
        <taxon>Saccharomycetes</taxon>
        <taxon>Saccharomycetales</taxon>
        <taxon>Saccharomycetaceae</taxon>
        <taxon>Kluyveromyces</taxon>
    </lineage>
</organism>
<evidence type="ECO:0000250" key="1"/>
<evidence type="ECO:0000250" key="2">
    <source>
        <dbReference type="UniProtKB" id="Q03103"/>
    </source>
</evidence>
<evidence type="ECO:0000255" key="3"/>
<evidence type="ECO:0000305" key="4"/>
<gene>
    <name type="primary">ERO1</name>
    <name type="ordered locus">KLLA0D10241g</name>
</gene>
<dbReference type="EC" id="1.8.4.-"/>
<dbReference type="EMBL" id="AJ489319">
    <property type="protein sequence ID" value="CAD33524.1"/>
    <property type="molecule type" value="Genomic_DNA"/>
</dbReference>
<dbReference type="EMBL" id="CR382124">
    <property type="protein sequence ID" value="CAH00613.1"/>
    <property type="molecule type" value="Genomic_DNA"/>
</dbReference>
<dbReference type="RefSeq" id="XP_453517.1">
    <property type="nucleotide sequence ID" value="XM_453517.1"/>
</dbReference>
<dbReference type="SMR" id="Q8NIP5"/>
<dbReference type="FunCoup" id="Q8NIP5">
    <property type="interactions" value="828"/>
</dbReference>
<dbReference type="STRING" id="284590.Q8NIP5"/>
<dbReference type="GlyCosmos" id="Q8NIP5">
    <property type="glycosylation" value="5 sites, No reported glycans"/>
</dbReference>
<dbReference type="PaxDb" id="284590-Q8NIP5"/>
<dbReference type="KEGG" id="kla:KLLA0_D10241g"/>
<dbReference type="eggNOG" id="KOG2608">
    <property type="taxonomic scope" value="Eukaryota"/>
</dbReference>
<dbReference type="HOGENOM" id="CLU_023061_1_0_1"/>
<dbReference type="InParanoid" id="Q8NIP5"/>
<dbReference type="OMA" id="CYKDRLH"/>
<dbReference type="Proteomes" id="UP000000598">
    <property type="component" value="Chromosome D"/>
</dbReference>
<dbReference type="GO" id="GO:0005789">
    <property type="term" value="C:endoplasmic reticulum membrane"/>
    <property type="evidence" value="ECO:0007669"/>
    <property type="project" value="UniProtKB-SubCell"/>
</dbReference>
<dbReference type="GO" id="GO:0071949">
    <property type="term" value="F:FAD binding"/>
    <property type="evidence" value="ECO:0007669"/>
    <property type="project" value="InterPro"/>
</dbReference>
<dbReference type="GO" id="GO:0015035">
    <property type="term" value="F:protein-disulfide reductase activity"/>
    <property type="evidence" value="ECO:0007669"/>
    <property type="project" value="InterPro"/>
</dbReference>
<dbReference type="GO" id="GO:0016972">
    <property type="term" value="F:thiol oxidase activity"/>
    <property type="evidence" value="ECO:0007669"/>
    <property type="project" value="InterPro"/>
</dbReference>
<dbReference type="GO" id="GO:0034975">
    <property type="term" value="P:protein folding in endoplasmic reticulum"/>
    <property type="evidence" value="ECO:0007669"/>
    <property type="project" value="InterPro"/>
</dbReference>
<dbReference type="InterPro" id="IPR007266">
    <property type="entry name" value="Ero1"/>
</dbReference>
<dbReference type="InterPro" id="IPR037192">
    <property type="entry name" value="ERO1-like_sf"/>
</dbReference>
<dbReference type="PANTHER" id="PTHR12613:SF0">
    <property type="entry name" value="ERO1-LIKE PROTEIN"/>
    <property type="match status" value="1"/>
</dbReference>
<dbReference type="PANTHER" id="PTHR12613">
    <property type="entry name" value="ERO1-RELATED"/>
    <property type="match status" value="1"/>
</dbReference>
<dbReference type="Pfam" id="PF04137">
    <property type="entry name" value="ERO1"/>
    <property type="match status" value="1"/>
</dbReference>
<dbReference type="PIRSF" id="PIRSF017205">
    <property type="entry name" value="ERO1"/>
    <property type="match status" value="1"/>
</dbReference>
<dbReference type="SUPFAM" id="SSF110019">
    <property type="entry name" value="ERO1-like"/>
    <property type="match status" value="1"/>
</dbReference>
<protein>
    <recommendedName>
        <fullName>Endoplasmic reticulum oxidoreductin-1</fullName>
        <ecNumber>1.8.4.-</ecNumber>
    </recommendedName>
</protein>
<accession>Q8NIP5</accession>
<proteinExistence type="inferred from homology"/>
<sequence>MVKVLQLCFLSAISLVQALNSTVDQKDEAKVDINTVFDNDSTNFCRMDKTEAIGATCDVTFHEINEVNNNIRPQLLSLVQSDFFKYFKLDLYKECPFWSDNNGYCVNRACAVDVVEDWDSLPEYWQPEILGNIENATTDITDDECSFLDELCDKPRFEAEKDIEYCDTNDFNSQHSVLVDLTANPERFTGYGGEQSSQIWSSIYKENCFSLGDENQCLAKDAFYRLISGLHASIGTHLSNEHLNTETGKWEPNLELFMTRVGNFPDRVSNIYFNFAVVAKALWKIRPYMNELGFCNAYNEDVKGMIDGVVSQLNSKVFNEDLLFHDEVSGQLKDDFRIRFKNVTKIMDCVQCDRCRLWGKVQTTGYATSLKILFEMDNDDDVARQHVVDKLTKYELIALFNTFDRLSKSVEAVNRFEEMYNYQLKSPGEKLASFFQLDNFFKVLNDKFNSANHSSQEKESVSNVEKKVNEFNDLKMPEKKKETHTEVREQASGVFKEAWDVEWKNFKQALRFIVTSYTDLPSTVSKYTVLKLNKLWNKFIGVPNYLEEGEELEYPSYNYEE</sequence>
<comment type="function">
    <text evidence="1">Essential oxidoreductase that oxidizes proteins in the endoplasmic reticulum to produce disulfide bonds. Acts by oxidizing directly PDI1 isomerase through a direct disulfide exchange. Does not act as a direct oxidant of folding substrate, but relies on PDI1 to transfer oxidizing equivalent. Does not oxidize all pdi related proteins, suggesting that it can discriminate between PDI1 and related proteins. Its reoxidation probably involves electron transfer to molecular oxygen via FAD. Acts independently of glutathione. May be responsible for a significant proportion of reactive oxygen species (ROS) in the cell, thereby being a source of oxidative stress (By similarity).</text>
</comment>
<comment type="cofactor">
    <cofactor evidence="2">
        <name>FAD</name>
        <dbReference type="ChEBI" id="CHEBI:57692"/>
    </cofactor>
</comment>
<comment type="subunit">
    <text evidence="1">May function both as a monomer and a homodimer.</text>
</comment>
<comment type="subcellular location">
    <subcellularLocation>
        <location evidence="1">Endoplasmic reticulum membrane</location>
        <topology evidence="1">Peripheral membrane protein</topology>
        <orientation evidence="1">Lumenal side</orientation>
    </subcellularLocation>
</comment>
<comment type="similarity">
    <text evidence="4">Belongs to the EROs family.</text>
</comment>
<reference key="1">
    <citation type="submission" date="2002-06" db="EMBL/GenBank/DDBJ databases">
        <title>Cloning and characterization of ERO1 gene of Kluyveromyces lactis.</title>
        <authorList>
            <person name="Lodi T."/>
        </authorList>
    </citation>
    <scope>NUCLEOTIDE SEQUENCE [GENOMIC DNA]</scope>
    <source>
        <strain>ATCC 8585 / CBS 2359 / DSM 70799 / NBRC 1267 / NRRL Y-1140 / WM37</strain>
    </source>
</reference>
<reference key="2">
    <citation type="journal article" date="2004" name="Nature">
        <title>Genome evolution in yeasts.</title>
        <authorList>
            <person name="Dujon B."/>
            <person name="Sherman D."/>
            <person name="Fischer G."/>
            <person name="Durrens P."/>
            <person name="Casaregola S."/>
            <person name="Lafontaine I."/>
            <person name="de Montigny J."/>
            <person name="Marck C."/>
            <person name="Neuveglise C."/>
            <person name="Talla E."/>
            <person name="Goffard N."/>
            <person name="Frangeul L."/>
            <person name="Aigle M."/>
            <person name="Anthouard V."/>
            <person name="Babour A."/>
            <person name="Barbe V."/>
            <person name="Barnay S."/>
            <person name="Blanchin S."/>
            <person name="Beckerich J.-M."/>
            <person name="Beyne E."/>
            <person name="Bleykasten C."/>
            <person name="Boisrame A."/>
            <person name="Boyer J."/>
            <person name="Cattolico L."/>
            <person name="Confanioleri F."/>
            <person name="de Daruvar A."/>
            <person name="Despons L."/>
            <person name="Fabre E."/>
            <person name="Fairhead C."/>
            <person name="Ferry-Dumazet H."/>
            <person name="Groppi A."/>
            <person name="Hantraye F."/>
            <person name="Hennequin C."/>
            <person name="Jauniaux N."/>
            <person name="Joyet P."/>
            <person name="Kachouri R."/>
            <person name="Kerrest A."/>
            <person name="Koszul R."/>
            <person name="Lemaire M."/>
            <person name="Lesur I."/>
            <person name="Ma L."/>
            <person name="Muller H."/>
            <person name="Nicaud J.-M."/>
            <person name="Nikolski M."/>
            <person name="Oztas S."/>
            <person name="Ozier-Kalogeropoulos O."/>
            <person name="Pellenz S."/>
            <person name="Potier S."/>
            <person name="Richard G.-F."/>
            <person name="Straub M.-L."/>
            <person name="Suleau A."/>
            <person name="Swennen D."/>
            <person name="Tekaia F."/>
            <person name="Wesolowski-Louvel M."/>
            <person name="Westhof E."/>
            <person name="Wirth B."/>
            <person name="Zeniou-Meyer M."/>
            <person name="Zivanovic Y."/>
            <person name="Bolotin-Fukuhara M."/>
            <person name="Thierry A."/>
            <person name="Bouchier C."/>
            <person name="Caudron B."/>
            <person name="Scarpelli C."/>
            <person name="Gaillardin C."/>
            <person name="Weissenbach J."/>
            <person name="Wincker P."/>
            <person name="Souciet J.-L."/>
        </authorList>
    </citation>
    <scope>NUCLEOTIDE SEQUENCE [LARGE SCALE GENOMIC DNA]</scope>
    <source>
        <strain>ATCC 8585 / CBS 2359 / DSM 70799 / NBRC 1267 / NRRL Y-1140 / WM37</strain>
    </source>
</reference>